<name>NUOK_ACIC5</name>
<feature type="chain" id="PRO_0000389910" description="NADH-quinone oxidoreductase subunit K">
    <location>
        <begin position="1"/>
        <end position="104"/>
    </location>
</feature>
<feature type="transmembrane region" description="Helical" evidence="1">
    <location>
        <begin position="4"/>
        <end position="24"/>
    </location>
</feature>
<feature type="transmembrane region" description="Helical" evidence="1">
    <location>
        <begin position="28"/>
        <end position="48"/>
    </location>
</feature>
<feature type="transmembrane region" description="Helical" evidence="1">
    <location>
        <begin position="64"/>
        <end position="84"/>
    </location>
</feature>
<gene>
    <name evidence="1" type="primary">nuoK</name>
    <name type="ordered locus">ACP_0287</name>
</gene>
<comment type="function">
    <text evidence="1">NDH-1 shuttles electrons from NADH, via FMN and iron-sulfur (Fe-S) centers, to quinones in the respiratory chain. The immediate electron acceptor for the enzyme in this species is believed to be ubiquinone. Couples the redox reaction to proton translocation (for every two electrons transferred, four hydrogen ions are translocated across the cytoplasmic membrane), and thus conserves the redox energy in a proton gradient.</text>
</comment>
<comment type="catalytic activity">
    <reaction evidence="1">
        <text>a quinone + NADH + 5 H(+)(in) = a quinol + NAD(+) + 4 H(+)(out)</text>
        <dbReference type="Rhea" id="RHEA:57888"/>
        <dbReference type="ChEBI" id="CHEBI:15378"/>
        <dbReference type="ChEBI" id="CHEBI:24646"/>
        <dbReference type="ChEBI" id="CHEBI:57540"/>
        <dbReference type="ChEBI" id="CHEBI:57945"/>
        <dbReference type="ChEBI" id="CHEBI:132124"/>
    </reaction>
</comment>
<comment type="subunit">
    <text evidence="1">NDH-1 is composed of 14 different subunits. Subunits NuoA, H, J, K, L, M, N constitute the membrane sector of the complex.</text>
</comment>
<comment type="subcellular location">
    <subcellularLocation>
        <location evidence="1">Cell inner membrane</location>
        <topology evidence="1">Multi-pass membrane protein</topology>
    </subcellularLocation>
</comment>
<comment type="similarity">
    <text evidence="1">Belongs to the complex I subunit 4L family.</text>
</comment>
<accession>C1F9D3</accession>
<keyword id="KW-0997">Cell inner membrane</keyword>
<keyword id="KW-1003">Cell membrane</keyword>
<keyword id="KW-0472">Membrane</keyword>
<keyword id="KW-0520">NAD</keyword>
<keyword id="KW-0874">Quinone</keyword>
<keyword id="KW-1185">Reference proteome</keyword>
<keyword id="KW-1278">Translocase</keyword>
<keyword id="KW-0812">Transmembrane</keyword>
<keyword id="KW-1133">Transmembrane helix</keyword>
<keyword id="KW-0813">Transport</keyword>
<keyword id="KW-0830">Ubiquinone</keyword>
<evidence type="ECO:0000255" key="1">
    <source>
        <dbReference type="HAMAP-Rule" id="MF_01456"/>
    </source>
</evidence>
<reference key="1">
    <citation type="journal article" date="2009" name="Appl. Environ. Microbiol.">
        <title>Three genomes from the phylum Acidobacteria provide insight into the lifestyles of these microorganisms in soils.</title>
        <authorList>
            <person name="Ward N.L."/>
            <person name="Challacombe J.F."/>
            <person name="Janssen P.H."/>
            <person name="Henrissat B."/>
            <person name="Coutinho P.M."/>
            <person name="Wu M."/>
            <person name="Xie G."/>
            <person name="Haft D.H."/>
            <person name="Sait M."/>
            <person name="Badger J."/>
            <person name="Barabote R.D."/>
            <person name="Bradley B."/>
            <person name="Brettin T.S."/>
            <person name="Brinkac L.M."/>
            <person name="Bruce D."/>
            <person name="Creasy T."/>
            <person name="Daugherty S.C."/>
            <person name="Davidsen T.M."/>
            <person name="DeBoy R.T."/>
            <person name="Detter J.C."/>
            <person name="Dodson R.J."/>
            <person name="Durkin A.S."/>
            <person name="Ganapathy A."/>
            <person name="Gwinn-Giglio M."/>
            <person name="Han C.S."/>
            <person name="Khouri H."/>
            <person name="Kiss H."/>
            <person name="Kothari S.P."/>
            <person name="Madupu R."/>
            <person name="Nelson K.E."/>
            <person name="Nelson W.C."/>
            <person name="Paulsen I."/>
            <person name="Penn K."/>
            <person name="Ren Q."/>
            <person name="Rosovitz M.J."/>
            <person name="Selengut J.D."/>
            <person name="Shrivastava S."/>
            <person name="Sullivan S.A."/>
            <person name="Tapia R."/>
            <person name="Thompson L.S."/>
            <person name="Watkins K.L."/>
            <person name="Yang Q."/>
            <person name="Yu C."/>
            <person name="Zafar N."/>
            <person name="Zhou L."/>
            <person name="Kuske C.R."/>
        </authorList>
    </citation>
    <scope>NUCLEOTIDE SEQUENCE [LARGE SCALE GENOMIC DNA]</scope>
    <source>
        <strain>ATCC 51196 / DSM 11244 / BCRC 80197 / JCM 7670 / NBRC 15755 / NCIMB 13165 / 161</strain>
    </source>
</reference>
<organism>
    <name type="scientific">Acidobacterium capsulatum (strain ATCC 51196 / DSM 11244 / BCRC 80197 / JCM 7670 / NBRC 15755 / NCIMB 13165 / 161)</name>
    <dbReference type="NCBI Taxonomy" id="240015"/>
    <lineage>
        <taxon>Bacteria</taxon>
        <taxon>Pseudomonadati</taxon>
        <taxon>Acidobacteriota</taxon>
        <taxon>Terriglobia</taxon>
        <taxon>Terriglobales</taxon>
        <taxon>Acidobacteriaceae</taxon>
        <taxon>Acidobacterium</taxon>
    </lineage>
</organism>
<proteinExistence type="inferred from homology"/>
<protein>
    <recommendedName>
        <fullName evidence="1">NADH-quinone oxidoreductase subunit K</fullName>
        <ecNumber evidence="1">7.1.1.-</ecNumber>
    </recommendedName>
    <alternativeName>
        <fullName evidence="1">NADH dehydrogenase I subunit K</fullName>
    </alternativeName>
    <alternativeName>
        <fullName evidence="1">NDH-1 subunit K</fullName>
    </alternativeName>
</protein>
<dbReference type="EC" id="7.1.1.-" evidence="1"/>
<dbReference type="EMBL" id="CP001472">
    <property type="protein sequence ID" value="ACO34349.1"/>
    <property type="molecule type" value="Genomic_DNA"/>
</dbReference>
<dbReference type="RefSeq" id="WP_012680688.1">
    <property type="nucleotide sequence ID" value="NC_012483.1"/>
</dbReference>
<dbReference type="SMR" id="C1F9D3"/>
<dbReference type="FunCoup" id="C1F9D3">
    <property type="interactions" value="239"/>
</dbReference>
<dbReference type="STRING" id="240015.ACP_0287"/>
<dbReference type="KEGG" id="aca:ACP_0287"/>
<dbReference type="eggNOG" id="COG0713">
    <property type="taxonomic scope" value="Bacteria"/>
</dbReference>
<dbReference type="HOGENOM" id="CLU_144724_0_0_0"/>
<dbReference type="InParanoid" id="C1F9D3"/>
<dbReference type="OrthoDB" id="9810120at2"/>
<dbReference type="Proteomes" id="UP000002207">
    <property type="component" value="Chromosome"/>
</dbReference>
<dbReference type="GO" id="GO:0030964">
    <property type="term" value="C:NADH dehydrogenase complex"/>
    <property type="evidence" value="ECO:0007669"/>
    <property type="project" value="TreeGrafter"/>
</dbReference>
<dbReference type="GO" id="GO:0005886">
    <property type="term" value="C:plasma membrane"/>
    <property type="evidence" value="ECO:0007669"/>
    <property type="project" value="UniProtKB-SubCell"/>
</dbReference>
<dbReference type="GO" id="GO:0050136">
    <property type="term" value="F:NADH:ubiquinone reductase (non-electrogenic) activity"/>
    <property type="evidence" value="ECO:0007669"/>
    <property type="project" value="UniProtKB-UniRule"/>
</dbReference>
<dbReference type="GO" id="GO:0048038">
    <property type="term" value="F:quinone binding"/>
    <property type="evidence" value="ECO:0007669"/>
    <property type="project" value="UniProtKB-KW"/>
</dbReference>
<dbReference type="GO" id="GO:0042773">
    <property type="term" value="P:ATP synthesis coupled electron transport"/>
    <property type="evidence" value="ECO:0007669"/>
    <property type="project" value="InterPro"/>
</dbReference>
<dbReference type="FunFam" id="1.10.287.3510:FF:000001">
    <property type="entry name" value="NADH-quinone oxidoreductase subunit K"/>
    <property type="match status" value="1"/>
</dbReference>
<dbReference type="Gene3D" id="1.10.287.3510">
    <property type="match status" value="1"/>
</dbReference>
<dbReference type="HAMAP" id="MF_01456">
    <property type="entry name" value="NDH1_NuoK"/>
    <property type="match status" value="1"/>
</dbReference>
<dbReference type="InterPro" id="IPR001133">
    <property type="entry name" value="NADH_UbQ_OxRdtase_chain4L/K"/>
</dbReference>
<dbReference type="InterPro" id="IPR039428">
    <property type="entry name" value="NUOK/Mnh_C1-like"/>
</dbReference>
<dbReference type="NCBIfam" id="NF004320">
    <property type="entry name" value="PRK05715.1-2"/>
    <property type="match status" value="1"/>
</dbReference>
<dbReference type="NCBIfam" id="NF004321">
    <property type="entry name" value="PRK05715.1-3"/>
    <property type="match status" value="1"/>
</dbReference>
<dbReference type="NCBIfam" id="NF004323">
    <property type="entry name" value="PRK05715.1-5"/>
    <property type="match status" value="1"/>
</dbReference>
<dbReference type="PANTHER" id="PTHR11434:SF21">
    <property type="entry name" value="NADH DEHYDROGENASE SUBUNIT 4L-RELATED"/>
    <property type="match status" value="1"/>
</dbReference>
<dbReference type="PANTHER" id="PTHR11434">
    <property type="entry name" value="NADH-UBIQUINONE OXIDOREDUCTASE SUBUNIT ND4L"/>
    <property type="match status" value="1"/>
</dbReference>
<dbReference type="Pfam" id="PF00420">
    <property type="entry name" value="Oxidored_q2"/>
    <property type="match status" value="1"/>
</dbReference>
<sequence>MVPVAYYLVLSAILFSIGVGAFLIKRNIITIFMSIELMLNAVNLSFVAFANYWRQINHQFSGQIFVFFVMVVAAAEAAVGLAIIIALFRSRSTLNVDQVDLMKL</sequence>